<name>NQOR_BURVG</name>
<sequence length="200" mass="20917">MAKVLVLYYSSYGHVETMAQHVAEGAKSVPGVEVTLKRVPETIPVDQAKAIGVKVDQAAPVATVDELANYDAIIFGTPTRFGNMAGQMRTFLDQTGGLWMKGALVGKIGSVFASTGTQHGGQETTITSFHTTLLHHGMVIVGVPYACSGLVDMKEITGGTPYGATTLAGADGSRQPSANELDIARYQGKHVAQLAAKLAA</sequence>
<protein>
    <recommendedName>
        <fullName evidence="1">NAD(P)H dehydrogenase (quinone)</fullName>
        <ecNumber evidence="1">1.6.5.2</ecNumber>
    </recommendedName>
    <alternativeName>
        <fullName>Flavoprotein WrbA</fullName>
    </alternativeName>
    <alternativeName>
        <fullName evidence="1">NAD(P)H:quinone oxidoreductase</fullName>
        <shortName evidence="1">NQO</shortName>
    </alternativeName>
</protein>
<organism>
    <name type="scientific">Burkholderia vietnamiensis (strain G4 / LMG 22486)</name>
    <name type="common">Burkholderia cepacia (strain R1808)</name>
    <dbReference type="NCBI Taxonomy" id="269482"/>
    <lineage>
        <taxon>Bacteria</taxon>
        <taxon>Pseudomonadati</taxon>
        <taxon>Pseudomonadota</taxon>
        <taxon>Betaproteobacteria</taxon>
        <taxon>Burkholderiales</taxon>
        <taxon>Burkholderiaceae</taxon>
        <taxon>Burkholderia</taxon>
        <taxon>Burkholderia cepacia complex</taxon>
    </lineage>
</organism>
<comment type="catalytic activity">
    <reaction evidence="1">
        <text>a quinone + NADH + H(+) = a quinol + NAD(+)</text>
        <dbReference type="Rhea" id="RHEA:46160"/>
        <dbReference type="ChEBI" id="CHEBI:15378"/>
        <dbReference type="ChEBI" id="CHEBI:24646"/>
        <dbReference type="ChEBI" id="CHEBI:57540"/>
        <dbReference type="ChEBI" id="CHEBI:57945"/>
        <dbReference type="ChEBI" id="CHEBI:132124"/>
        <dbReference type="EC" id="1.6.5.2"/>
    </reaction>
</comment>
<comment type="catalytic activity">
    <reaction evidence="1">
        <text>a quinone + NADPH + H(+) = a quinol + NADP(+)</text>
        <dbReference type="Rhea" id="RHEA:46164"/>
        <dbReference type="ChEBI" id="CHEBI:15378"/>
        <dbReference type="ChEBI" id="CHEBI:24646"/>
        <dbReference type="ChEBI" id="CHEBI:57783"/>
        <dbReference type="ChEBI" id="CHEBI:58349"/>
        <dbReference type="ChEBI" id="CHEBI:132124"/>
        <dbReference type="EC" id="1.6.5.2"/>
    </reaction>
</comment>
<comment type="cofactor">
    <cofactor evidence="1">
        <name>FMN</name>
        <dbReference type="ChEBI" id="CHEBI:58210"/>
    </cofactor>
    <text evidence="1">Binds 1 FMN per monomer.</text>
</comment>
<comment type="similarity">
    <text evidence="1">Belongs to the WrbA family.</text>
</comment>
<dbReference type="EC" id="1.6.5.2" evidence="1"/>
<dbReference type="EMBL" id="CP000616">
    <property type="protein sequence ID" value="ABO59494.1"/>
    <property type="molecule type" value="Genomic_DNA"/>
</dbReference>
<dbReference type="SMR" id="A4JT91"/>
<dbReference type="KEGG" id="bvi:Bcep1808_6600"/>
<dbReference type="eggNOG" id="COG0655">
    <property type="taxonomic scope" value="Bacteria"/>
</dbReference>
<dbReference type="HOGENOM" id="CLU_051402_0_2_4"/>
<dbReference type="Proteomes" id="UP000002287">
    <property type="component" value="Chromosome 3"/>
</dbReference>
<dbReference type="GO" id="GO:0016020">
    <property type="term" value="C:membrane"/>
    <property type="evidence" value="ECO:0007669"/>
    <property type="project" value="TreeGrafter"/>
</dbReference>
<dbReference type="GO" id="GO:0050660">
    <property type="term" value="F:flavin adenine dinucleotide binding"/>
    <property type="evidence" value="ECO:0007669"/>
    <property type="project" value="UniProtKB-UniRule"/>
</dbReference>
<dbReference type="GO" id="GO:0010181">
    <property type="term" value="F:FMN binding"/>
    <property type="evidence" value="ECO:0007669"/>
    <property type="project" value="InterPro"/>
</dbReference>
<dbReference type="GO" id="GO:0051287">
    <property type="term" value="F:NAD binding"/>
    <property type="evidence" value="ECO:0007669"/>
    <property type="project" value="UniProtKB-UniRule"/>
</dbReference>
<dbReference type="GO" id="GO:0050136">
    <property type="term" value="F:NADH:ubiquinone reductase (non-electrogenic) activity"/>
    <property type="evidence" value="ECO:0007669"/>
    <property type="project" value="RHEA"/>
</dbReference>
<dbReference type="GO" id="GO:0050661">
    <property type="term" value="F:NADP binding"/>
    <property type="evidence" value="ECO:0007669"/>
    <property type="project" value="UniProtKB-UniRule"/>
</dbReference>
<dbReference type="GO" id="GO:0008753">
    <property type="term" value="F:NADPH dehydrogenase (quinone) activity"/>
    <property type="evidence" value="ECO:0007669"/>
    <property type="project" value="RHEA"/>
</dbReference>
<dbReference type="FunFam" id="3.40.50.360:FF:000001">
    <property type="entry name" value="NAD(P)H dehydrogenase (Quinone) FQR1-like"/>
    <property type="match status" value="1"/>
</dbReference>
<dbReference type="Gene3D" id="3.40.50.360">
    <property type="match status" value="1"/>
</dbReference>
<dbReference type="HAMAP" id="MF_01017">
    <property type="entry name" value="NQOR"/>
    <property type="match status" value="1"/>
</dbReference>
<dbReference type="InterPro" id="IPR008254">
    <property type="entry name" value="Flavodoxin/NO_synth"/>
</dbReference>
<dbReference type="InterPro" id="IPR029039">
    <property type="entry name" value="Flavoprotein-like_sf"/>
</dbReference>
<dbReference type="InterPro" id="IPR010089">
    <property type="entry name" value="Flavoprotein_WrbA-like"/>
</dbReference>
<dbReference type="InterPro" id="IPR005025">
    <property type="entry name" value="FMN_Rdtase-like_dom"/>
</dbReference>
<dbReference type="InterPro" id="IPR037513">
    <property type="entry name" value="NQO"/>
</dbReference>
<dbReference type="NCBIfam" id="TIGR01755">
    <property type="entry name" value="flav_wrbA"/>
    <property type="match status" value="1"/>
</dbReference>
<dbReference type="NCBIfam" id="NF002999">
    <property type="entry name" value="PRK03767.1"/>
    <property type="match status" value="1"/>
</dbReference>
<dbReference type="PANTHER" id="PTHR30546">
    <property type="entry name" value="FLAVODOXIN-RELATED PROTEIN WRBA-RELATED"/>
    <property type="match status" value="1"/>
</dbReference>
<dbReference type="PANTHER" id="PTHR30546:SF23">
    <property type="entry name" value="FLAVOPROTEIN-LIKE PROTEIN YCP4-RELATED"/>
    <property type="match status" value="1"/>
</dbReference>
<dbReference type="Pfam" id="PF03358">
    <property type="entry name" value="FMN_red"/>
    <property type="match status" value="1"/>
</dbReference>
<dbReference type="SUPFAM" id="SSF52218">
    <property type="entry name" value="Flavoproteins"/>
    <property type="match status" value="1"/>
</dbReference>
<dbReference type="PROSITE" id="PS50902">
    <property type="entry name" value="FLAVODOXIN_LIKE"/>
    <property type="match status" value="1"/>
</dbReference>
<reference key="1">
    <citation type="submission" date="2007-03" db="EMBL/GenBank/DDBJ databases">
        <title>Complete sequence of chromosome 3 of Burkholderia vietnamiensis G4.</title>
        <authorList>
            <consortium name="US DOE Joint Genome Institute"/>
            <person name="Copeland A."/>
            <person name="Lucas S."/>
            <person name="Lapidus A."/>
            <person name="Barry K."/>
            <person name="Detter J.C."/>
            <person name="Glavina del Rio T."/>
            <person name="Hammon N."/>
            <person name="Israni S."/>
            <person name="Dalin E."/>
            <person name="Tice H."/>
            <person name="Pitluck S."/>
            <person name="Chain P."/>
            <person name="Malfatti S."/>
            <person name="Shin M."/>
            <person name="Vergez L."/>
            <person name="Schmutz J."/>
            <person name="Larimer F."/>
            <person name="Land M."/>
            <person name="Hauser L."/>
            <person name="Kyrpides N."/>
            <person name="Tiedje J."/>
            <person name="Richardson P."/>
        </authorList>
    </citation>
    <scope>NUCLEOTIDE SEQUENCE [LARGE SCALE GENOMIC DNA]</scope>
    <source>
        <strain>G4 / LMG 22486</strain>
    </source>
</reference>
<proteinExistence type="inferred from homology"/>
<feature type="chain" id="PRO_1000084133" description="NAD(P)H dehydrogenase (quinone)">
    <location>
        <begin position="1"/>
        <end position="200"/>
    </location>
</feature>
<feature type="domain" description="Flavodoxin-like" evidence="1">
    <location>
        <begin position="4"/>
        <end position="191"/>
    </location>
</feature>
<feature type="binding site" evidence="1">
    <location>
        <begin position="10"/>
        <end position="15"/>
    </location>
    <ligand>
        <name>FMN</name>
        <dbReference type="ChEBI" id="CHEBI:58210"/>
    </ligand>
</feature>
<feature type="binding site" evidence="1">
    <location>
        <position position="12"/>
    </location>
    <ligand>
        <name>NAD(+)</name>
        <dbReference type="ChEBI" id="CHEBI:57540"/>
    </ligand>
</feature>
<feature type="binding site" evidence="1">
    <location>
        <begin position="79"/>
        <end position="81"/>
    </location>
    <ligand>
        <name>FMN</name>
        <dbReference type="ChEBI" id="CHEBI:58210"/>
    </ligand>
</feature>
<feature type="binding site" evidence="1">
    <location>
        <position position="99"/>
    </location>
    <ligand>
        <name>substrate</name>
    </ligand>
</feature>
<feature type="binding site" evidence="1">
    <location>
        <begin position="114"/>
        <end position="120"/>
    </location>
    <ligand>
        <name>FMN</name>
        <dbReference type="ChEBI" id="CHEBI:58210"/>
    </ligand>
</feature>
<feature type="binding site" evidence="1">
    <location>
        <position position="135"/>
    </location>
    <ligand>
        <name>FMN</name>
        <dbReference type="ChEBI" id="CHEBI:58210"/>
    </ligand>
</feature>
<keyword id="KW-0285">Flavoprotein</keyword>
<keyword id="KW-0288">FMN</keyword>
<keyword id="KW-0520">NAD</keyword>
<keyword id="KW-0521">NADP</keyword>
<keyword id="KW-0547">Nucleotide-binding</keyword>
<keyword id="KW-0560">Oxidoreductase</keyword>
<accession>A4JT91</accession>
<evidence type="ECO:0000255" key="1">
    <source>
        <dbReference type="HAMAP-Rule" id="MF_01017"/>
    </source>
</evidence>
<gene>
    <name type="ordered locus">Bcep1808_6600</name>
</gene>